<dbReference type="EC" id="6.3.4.5" evidence="1"/>
<dbReference type="EMBL" id="CP000459">
    <property type="protein sequence ID" value="ABK10450.1"/>
    <property type="molecule type" value="Genomic_DNA"/>
</dbReference>
<dbReference type="RefSeq" id="WP_006479599.1">
    <property type="nucleotide sequence ID" value="NC_008543.1"/>
</dbReference>
<dbReference type="SMR" id="A0AYH4"/>
<dbReference type="GeneID" id="83050580"/>
<dbReference type="KEGG" id="bch:Bcen2424_3712"/>
<dbReference type="HOGENOM" id="CLU_032784_4_1_4"/>
<dbReference type="UniPathway" id="UPA00068">
    <property type="reaction ID" value="UER00113"/>
</dbReference>
<dbReference type="GO" id="GO:0005737">
    <property type="term" value="C:cytoplasm"/>
    <property type="evidence" value="ECO:0007669"/>
    <property type="project" value="UniProtKB-SubCell"/>
</dbReference>
<dbReference type="GO" id="GO:0004055">
    <property type="term" value="F:argininosuccinate synthase activity"/>
    <property type="evidence" value="ECO:0007669"/>
    <property type="project" value="UniProtKB-UniRule"/>
</dbReference>
<dbReference type="GO" id="GO:0005524">
    <property type="term" value="F:ATP binding"/>
    <property type="evidence" value="ECO:0007669"/>
    <property type="project" value="UniProtKB-UniRule"/>
</dbReference>
<dbReference type="GO" id="GO:0042803">
    <property type="term" value="F:protein homodimerization activity"/>
    <property type="evidence" value="ECO:0007669"/>
    <property type="project" value="InterPro"/>
</dbReference>
<dbReference type="GO" id="GO:0000053">
    <property type="term" value="P:argininosuccinate metabolic process"/>
    <property type="evidence" value="ECO:0007669"/>
    <property type="project" value="TreeGrafter"/>
</dbReference>
<dbReference type="GO" id="GO:0006526">
    <property type="term" value="P:L-arginine biosynthetic process"/>
    <property type="evidence" value="ECO:0007669"/>
    <property type="project" value="UniProtKB-UniRule"/>
</dbReference>
<dbReference type="GO" id="GO:0000050">
    <property type="term" value="P:urea cycle"/>
    <property type="evidence" value="ECO:0007669"/>
    <property type="project" value="TreeGrafter"/>
</dbReference>
<dbReference type="CDD" id="cd01999">
    <property type="entry name" value="ASS"/>
    <property type="match status" value="1"/>
</dbReference>
<dbReference type="FunFam" id="1.10.287.400:FF:000001">
    <property type="entry name" value="Argininosuccinate synthase"/>
    <property type="match status" value="1"/>
</dbReference>
<dbReference type="Gene3D" id="1.10.287.400">
    <property type="match status" value="1"/>
</dbReference>
<dbReference type="Gene3D" id="3.90.1260.10">
    <property type="entry name" value="Argininosuccinate synthetase, chain A, domain 2"/>
    <property type="match status" value="1"/>
</dbReference>
<dbReference type="Gene3D" id="3.40.50.620">
    <property type="entry name" value="HUPs"/>
    <property type="match status" value="1"/>
</dbReference>
<dbReference type="HAMAP" id="MF_00581">
    <property type="entry name" value="Arg_succ_synth_type2"/>
    <property type="match status" value="1"/>
</dbReference>
<dbReference type="InterPro" id="IPR023437">
    <property type="entry name" value="Arg_succ_synth_type2_subfam"/>
</dbReference>
<dbReference type="InterPro" id="IPR048268">
    <property type="entry name" value="Arginosuc_syn_C"/>
</dbReference>
<dbReference type="InterPro" id="IPR048267">
    <property type="entry name" value="Arginosuc_syn_N"/>
</dbReference>
<dbReference type="InterPro" id="IPR001518">
    <property type="entry name" value="Arginosuc_synth"/>
</dbReference>
<dbReference type="InterPro" id="IPR018223">
    <property type="entry name" value="Arginosuc_synth_CS"/>
</dbReference>
<dbReference type="InterPro" id="IPR023434">
    <property type="entry name" value="Arginosuc_synth_type_1_subfam"/>
</dbReference>
<dbReference type="InterPro" id="IPR024074">
    <property type="entry name" value="AS_cat/multimer_dom_body"/>
</dbReference>
<dbReference type="InterPro" id="IPR024073">
    <property type="entry name" value="AS_multimer_C_tail"/>
</dbReference>
<dbReference type="InterPro" id="IPR014729">
    <property type="entry name" value="Rossmann-like_a/b/a_fold"/>
</dbReference>
<dbReference type="NCBIfam" id="TIGR00032">
    <property type="entry name" value="argG"/>
    <property type="match status" value="1"/>
</dbReference>
<dbReference type="NCBIfam" id="NF003779">
    <property type="entry name" value="PRK05370.1"/>
    <property type="match status" value="1"/>
</dbReference>
<dbReference type="PANTHER" id="PTHR11587">
    <property type="entry name" value="ARGININOSUCCINATE SYNTHASE"/>
    <property type="match status" value="1"/>
</dbReference>
<dbReference type="PANTHER" id="PTHR11587:SF2">
    <property type="entry name" value="ARGININOSUCCINATE SYNTHASE"/>
    <property type="match status" value="1"/>
</dbReference>
<dbReference type="Pfam" id="PF20979">
    <property type="entry name" value="Arginosuc_syn_C"/>
    <property type="match status" value="1"/>
</dbReference>
<dbReference type="Pfam" id="PF00764">
    <property type="entry name" value="Arginosuc_synth"/>
    <property type="match status" value="1"/>
</dbReference>
<dbReference type="SUPFAM" id="SSF52402">
    <property type="entry name" value="Adenine nucleotide alpha hydrolases-like"/>
    <property type="match status" value="1"/>
</dbReference>
<dbReference type="SUPFAM" id="SSF69864">
    <property type="entry name" value="Argininosuccinate synthetase, C-terminal domain"/>
    <property type="match status" value="1"/>
</dbReference>
<dbReference type="PROSITE" id="PS00564">
    <property type="entry name" value="ARGININOSUCCIN_SYN_1"/>
    <property type="match status" value="1"/>
</dbReference>
<dbReference type="PROSITE" id="PS00565">
    <property type="entry name" value="ARGININOSUCCIN_SYN_2"/>
    <property type="match status" value="1"/>
</dbReference>
<organism>
    <name type="scientific">Burkholderia cenocepacia (strain HI2424)</name>
    <dbReference type="NCBI Taxonomy" id="331272"/>
    <lineage>
        <taxon>Bacteria</taxon>
        <taxon>Pseudomonadati</taxon>
        <taxon>Pseudomonadota</taxon>
        <taxon>Betaproteobacteria</taxon>
        <taxon>Burkholderiales</taxon>
        <taxon>Burkholderiaceae</taxon>
        <taxon>Burkholderia</taxon>
        <taxon>Burkholderia cepacia complex</taxon>
    </lineage>
</organism>
<evidence type="ECO:0000255" key="1">
    <source>
        <dbReference type="HAMAP-Rule" id="MF_00581"/>
    </source>
</evidence>
<protein>
    <recommendedName>
        <fullName evidence="1">Argininosuccinate synthase</fullName>
        <ecNumber evidence="1">6.3.4.5</ecNumber>
    </recommendedName>
    <alternativeName>
        <fullName evidence="1">Citrulline--aspartate ligase</fullName>
    </alternativeName>
</protein>
<feature type="chain" id="PRO_1000129739" description="Argininosuccinate synthase">
    <location>
        <begin position="1"/>
        <end position="445"/>
    </location>
</feature>
<feature type="binding site" evidence="1">
    <location>
        <begin position="17"/>
        <end position="25"/>
    </location>
    <ligand>
        <name>ATP</name>
        <dbReference type="ChEBI" id="CHEBI:30616"/>
    </ligand>
</feature>
<feature type="binding site" evidence="1">
    <location>
        <position position="43"/>
    </location>
    <ligand>
        <name>ATP</name>
        <dbReference type="ChEBI" id="CHEBI:30616"/>
    </ligand>
</feature>
<feature type="binding site" evidence="1">
    <location>
        <position position="99"/>
    </location>
    <ligand>
        <name>L-citrulline</name>
        <dbReference type="ChEBI" id="CHEBI:57743"/>
    </ligand>
</feature>
<feature type="binding site" evidence="1">
    <location>
        <position position="129"/>
    </location>
    <ligand>
        <name>ATP</name>
        <dbReference type="ChEBI" id="CHEBI:30616"/>
    </ligand>
</feature>
<feature type="binding site" evidence="1">
    <location>
        <position position="131"/>
    </location>
    <ligand>
        <name>ATP</name>
        <dbReference type="ChEBI" id="CHEBI:30616"/>
    </ligand>
</feature>
<feature type="binding site" evidence="1">
    <location>
        <position position="131"/>
    </location>
    <ligand>
        <name>L-aspartate</name>
        <dbReference type="ChEBI" id="CHEBI:29991"/>
    </ligand>
</feature>
<feature type="binding site" evidence="1">
    <location>
        <position position="135"/>
    </location>
    <ligand>
        <name>L-aspartate</name>
        <dbReference type="ChEBI" id="CHEBI:29991"/>
    </ligand>
</feature>
<feature type="binding site" evidence="1">
    <location>
        <position position="135"/>
    </location>
    <ligand>
        <name>L-citrulline</name>
        <dbReference type="ChEBI" id="CHEBI:57743"/>
    </ligand>
</feature>
<feature type="binding site" evidence="1">
    <location>
        <position position="136"/>
    </location>
    <ligand>
        <name>ATP</name>
        <dbReference type="ChEBI" id="CHEBI:30616"/>
    </ligand>
</feature>
<feature type="binding site" evidence="1">
    <location>
        <position position="136"/>
    </location>
    <ligand>
        <name>L-aspartate</name>
        <dbReference type="ChEBI" id="CHEBI:29991"/>
    </ligand>
</feature>
<feature type="binding site" evidence="1">
    <location>
        <position position="139"/>
    </location>
    <ligand>
        <name>L-citrulline</name>
        <dbReference type="ChEBI" id="CHEBI:57743"/>
    </ligand>
</feature>
<feature type="binding site" evidence="1">
    <location>
        <position position="192"/>
    </location>
    <ligand>
        <name>L-citrulline</name>
        <dbReference type="ChEBI" id="CHEBI:57743"/>
    </ligand>
</feature>
<feature type="binding site" evidence="1">
    <location>
        <position position="194"/>
    </location>
    <ligand>
        <name>ATP</name>
        <dbReference type="ChEBI" id="CHEBI:30616"/>
    </ligand>
</feature>
<feature type="binding site" evidence="1">
    <location>
        <position position="201"/>
    </location>
    <ligand>
        <name>L-citrulline</name>
        <dbReference type="ChEBI" id="CHEBI:57743"/>
    </ligand>
</feature>
<feature type="binding site" evidence="1">
    <location>
        <position position="203"/>
    </location>
    <ligand>
        <name>L-citrulline</name>
        <dbReference type="ChEBI" id="CHEBI:57743"/>
    </ligand>
</feature>
<feature type="binding site" evidence="1">
    <location>
        <position position="280"/>
    </location>
    <ligand>
        <name>L-citrulline</name>
        <dbReference type="ChEBI" id="CHEBI:57743"/>
    </ligand>
</feature>
<sequence>MSTILESLPTGQKVGIAFSGGLDTSAALHWMKLKGAVPYAYTANLGQPDEDDYDAIPKRAIEYGAAGARLIDCRAQLVAEGIAALQSGAFHITTAGVTYFNTTPIGRAVTGTMLVAAMKEDGVNIWGDGSTYKGNDIERFYRYGLLVNPDLKIYKPWLDQTFIDELGGRAEMSEFMNQAGFAYKMSAEKAYSTDSNLLGATHEAKDLESLESGIKIVNPIMGVAFWRDDVKIAAEEVTVRFEAGQPVALNGVEFKDQVELLLEANRIGGRHGLGMSDQIENRIIEAKSRGIYEAPGLALLYIAYERLVTGIHNEDTIEQYRENGRRLGRLLYQGRWFDPQAIMLRETAQRWVARAITGEVKIELRRGNDYSILSTKSPNLTYQPERLSMEKVASTFSPRDRIGQLTMRNLDITDTRDKLRVYSQVGLLTPGETSALPQIKGDGDK</sequence>
<keyword id="KW-0028">Amino-acid biosynthesis</keyword>
<keyword id="KW-0055">Arginine biosynthesis</keyword>
<keyword id="KW-0067">ATP-binding</keyword>
<keyword id="KW-0963">Cytoplasm</keyword>
<keyword id="KW-0436">Ligase</keyword>
<keyword id="KW-0547">Nucleotide-binding</keyword>
<reference key="1">
    <citation type="submission" date="2006-08" db="EMBL/GenBank/DDBJ databases">
        <title>Complete sequence of chromosome 2 of Burkholderia cenocepacia HI2424.</title>
        <authorList>
            <person name="Copeland A."/>
            <person name="Lucas S."/>
            <person name="Lapidus A."/>
            <person name="Barry K."/>
            <person name="Detter J.C."/>
            <person name="Glavina del Rio T."/>
            <person name="Hammon N."/>
            <person name="Israni S."/>
            <person name="Pitluck S."/>
            <person name="Chain P."/>
            <person name="Malfatti S."/>
            <person name="Shin M."/>
            <person name="Vergez L."/>
            <person name="Schmutz J."/>
            <person name="Larimer F."/>
            <person name="Land M."/>
            <person name="Hauser L."/>
            <person name="Kyrpides N."/>
            <person name="Kim E."/>
            <person name="LiPuma J.J."/>
            <person name="Gonzalez C.F."/>
            <person name="Konstantinidis K."/>
            <person name="Tiedje J.M."/>
            <person name="Richardson P."/>
        </authorList>
    </citation>
    <scope>NUCLEOTIDE SEQUENCE [LARGE SCALE GENOMIC DNA]</scope>
    <source>
        <strain>HI2424</strain>
    </source>
</reference>
<comment type="catalytic activity">
    <reaction evidence="1">
        <text>L-citrulline + L-aspartate + ATP = 2-(N(omega)-L-arginino)succinate + AMP + diphosphate + H(+)</text>
        <dbReference type="Rhea" id="RHEA:10932"/>
        <dbReference type="ChEBI" id="CHEBI:15378"/>
        <dbReference type="ChEBI" id="CHEBI:29991"/>
        <dbReference type="ChEBI" id="CHEBI:30616"/>
        <dbReference type="ChEBI" id="CHEBI:33019"/>
        <dbReference type="ChEBI" id="CHEBI:57472"/>
        <dbReference type="ChEBI" id="CHEBI:57743"/>
        <dbReference type="ChEBI" id="CHEBI:456215"/>
        <dbReference type="EC" id="6.3.4.5"/>
    </reaction>
</comment>
<comment type="pathway">
    <text evidence="1">Amino-acid biosynthesis; L-arginine biosynthesis; L-arginine from L-ornithine and carbamoyl phosphate: step 2/3.</text>
</comment>
<comment type="subunit">
    <text evidence="1">Homotetramer.</text>
</comment>
<comment type="subcellular location">
    <subcellularLocation>
        <location evidence="1">Cytoplasm</location>
    </subcellularLocation>
</comment>
<comment type="similarity">
    <text evidence="1">Belongs to the argininosuccinate synthase family. Type 2 subfamily.</text>
</comment>
<accession>A0AYH4</accession>
<name>ASSY_BURCH</name>
<proteinExistence type="inferred from homology"/>
<gene>
    <name evidence="1" type="primary">argG</name>
    <name type="ordered locus">Bcen2424_3712</name>
</gene>